<accession>P0DC27</accession>
<accession>P0A3P8</accession>
<accession>Q99YL7</accession>
<accession>Q9EVB4</accession>
<reference key="1">
    <citation type="journal article" date="2003" name="Genome Res.">
        <title>Genome sequence of an M3 strain of Streptococcus pyogenes reveals a large-scale genomic rearrangement in invasive strains and new insights into phage evolution.</title>
        <authorList>
            <person name="Nakagawa I."/>
            <person name="Kurokawa K."/>
            <person name="Yamashita A."/>
            <person name="Nakata M."/>
            <person name="Tomiyasu Y."/>
            <person name="Okahashi N."/>
            <person name="Kawabata S."/>
            <person name="Yamazaki K."/>
            <person name="Shiba T."/>
            <person name="Yasunaga T."/>
            <person name="Hayashi H."/>
            <person name="Hattori M."/>
            <person name="Hamada S."/>
        </authorList>
    </citation>
    <scope>NUCLEOTIDE SEQUENCE [LARGE SCALE GENOMIC DNA]</scope>
    <source>
        <strain>SSI-1</strain>
    </source>
</reference>
<dbReference type="EC" id="4.4.1.21"/>
<dbReference type="EMBL" id="BA000034">
    <property type="protein sequence ID" value="BAC63573.1"/>
    <property type="status" value="ALT_INIT"/>
    <property type="molecule type" value="Genomic_DNA"/>
</dbReference>
<dbReference type="RefSeq" id="WP_002988938.1">
    <property type="nucleotide sequence ID" value="NC_004606.1"/>
</dbReference>
<dbReference type="SMR" id="P0DC27"/>
<dbReference type="KEGG" id="sps:SPs0478"/>
<dbReference type="HOGENOM" id="CLU_107531_2_1_9"/>
<dbReference type="GO" id="GO:0005506">
    <property type="term" value="F:iron ion binding"/>
    <property type="evidence" value="ECO:0007669"/>
    <property type="project" value="InterPro"/>
</dbReference>
<dbReference type="GO" id="GO:0043768">
    <property type="term" value="F:S-ribosylhomocysteine lyase activity"/>
    <property type="evidence" value="ECO:0007669"/>
    <property type="project" value="UniProtKB-UniRule"/>
</dbReference>
<dbReference type="GO" id="GO:0009372">
    <property type="term" value="P:quorum sensing"/>
    <property type="evidence" value="ECO:0007669"/>
    <property type="project" value="UniProtKB-UniRule"/>
</dbReference>
<dbReference type="Gene3D" id="3.30.1360.80">
    <property type="entry name" value="S-ribosylhomocysteinase (LuxS)"/>
    <property type="match status" value="1"/>
</dbReference>
<dbReference type="HAMAP" id="MF_00091">
    <property type="entry name" value="LuxS"/>
    <property type="match status" value="1"/>
</dbReference>
<dbReference type="InterPro" id="IPR037005">
    <property type="entry name" value="LuxS_sf"/>
</dbReference>
<dbReference type="InterPro" id="IPR011249">
    <property type="entry name" value="Metalloenz_LuxS/M16"/>
</dbReference>
<dbReference type="InterPro" id="IPR003815">
    <property type="entry name" value="S-ribosylhomocysteinase"/>
</dbReference>
<dbReference type="NCBIfam" id="NF002607">
    <property type="entry name" value="PRK02260.2-5"/>
    <property type="match status" value="1"/>
</dbReference>
<dbReference type="NCBIfam" id="NF002608">
    <property type="entry name" value="PRK02260.3-1"/>
    <property type="match status" value="1"/>
</dbReference>
<dbReference type="PANTHER" id="PTHR35799">
    <property type="entry name" value="S-RIBOSYLHOMOCYSTEINE LYASE"/>
    <property type="match status" value="1"/>
</dbReference>
<dbReference type="PANTHER" id="PTHR35799:SF1">
    <property type="entry name" value="S-RIBOSYLHOMOCYSTEINE LYASE"/>
    <property type="match status" value="1"/>
</dbReference>
<dbReference type="Pfam" id="PF02664">
    <property type="entry name" value="LuxS"/>
    <property type="match status" value="1"/>
</dbReference>
<dbReference type="PIRSF" id="PIRSF006160">
    <property type="entry name" value="AI2"/>
    <property type="match status" value="1"/>
</dbReference>
<dbReference type="PRINTS" id="PR01487">
    <property type="entry name" value="LUXSPROTEIN"/>
</dbReference>
<dbReference type="SUPFAM" id="SSF63411">
    <property type="entry name" value="LuxS/MPP-like metallohydrolase"/>
    <property type="match status" value="1"/>
</dbReference>
<sequence length="160" mass="17979">MTKEVIVESFELDHTIVKAPYVRLISEEFGPKGDRITNFDVRLVQPNQNSIETAGLHTIEHLLAKLIRQRIDGMIDCSPFGCRTGFHLIMWGKHSSTDIAKVIKSSLEEIATGITWEDVPGTTLESCGNYKDHSLFAAKEWAQLIIDQGISDDPFSRHVI</sequence>
<name>LUXS_STRPQ</name>
<protein>
    <recommendedName>
        <fullName>S-ribosylhomocysteine lyase</fullName>
        <ecNumber>4.4.1.21</ecNumber>
    </recommendedName>
    <alternativeName>
        <fullName>AI-2 synthesis protein</fullName>
    </alternativeName>
    <alternativeName>
        <fullName>Autoinducer-2 production protein LuxS</fullName>
    </alternativeName>
</protein>
<gene>
    <name type="primary">luxS</name>
    <name type="ordered locus">SPs0478</name>
</gene>
<organism>
    <name type="scientific">Streptococcus pyogenes serotype M3 (strain SSI-1)</name>
    <dbReference type="NCBI Taxonomy" id="193567"/>
    <lineage>
        <taxon>Bacteria</taxon>
        <taxon>Bacillati</taxon>
        <taxon>Bacillota</taxon>
        <taxon>Bacilli</taxon>
        <taxon>Lactobacillales</taxon>
        <taxon>Streptococcaceae</taxon>
        <taxon>Streptococcus</taxon>
    </lineage>
</organism>
<evidence type="ECO:0000250" key="1"/>
<evidence type="ECO:0000305" key="2"/>
<keyword id="KW-0071">Autoinducer synthesis</keyword>
<keyword id="KW-0408">Iron</keyword>
<keyword id="KW-0456">Lyase</keyword>
<keyword id="KW-0479">Metal-binding</keyword>
<keyword id="KW-0673">Quorum sensing</keyword>
<feature type="chain" id="PRO_0000411401" description="S-ribosylhomocysteine lyase">
    <location>
        <begin position="1"/>
        <end position="160"/>
    </location>
</feature>
<feature type="binding site" evidence="1">
    <location>
        <position position="57"/>
    </location>
    <ligand>
        <name>Fe cation</name>
        <dbReference type="ChEBI" id="CHEBI:24875"/>
    </ligand>
</feature>
<feature type="binding site" evidence="1">
    <location>
        <position position="61"/>
    </location>
    <ligand>
        <name>Fe cation</name>
        <dbReference type="ChEBI" id="CHEBI:24875"/>
    </ligand>
</feature>
<feature type="binding site" evidence="1">
    <location>
        <position position="127"/>
    </location>
    <ligand>
        <name>Fe cation</name>
        <dbReference type="ChEBI" id="CHEBI:24875"/>
    </ligand>
</feature>
<comment type="function">
    <text evidence="1">Involved in the synthesis of autoinducer 2 (AI-2) which is secreted by bacteria and is used to communicate both the cell density and the metabolic potential of the environment. The regulation of gene expression in response to changes in cell density is called quorum sensing. Catalyzes the transformation of S-ribosylhomocysteine (RHC) to homocysteine (HC) and 4,5-dihydroxy-2,3-pentadione (DPD) (By similarity).</text>
</comment>
<comment type="catalytic activity">
    <reaction>
        <text>S-(5-deoxy-D-ribos-5-yl)-L-homocysteine = (S)-4,5-dihydroxypentane-2,3-dione + L-homocysteine</text>
        <dbReference type="Rhea" id="RHEA:17753"/>
        <dbReference type="ChEBI" id="CHEBI:29484"/>
        <dbReference type="ChEBI" id="CHEBI:58195"/>
        <dbReference type="ChEBI" id="CHEBI:58199"/>
        <dbReference type="EC" id="4.4.1.21"/>
    </reaction>
</comment>
<comment type="cofactor">
    <cofactor evidence="1">
        <name>Fe cation</name>
        <dbReference type="ChEBI" id="CHEBI:24875"/>
    </cofactor>
    <text evidence="1">Binds 1 Fe cation per subunit.</text>
</comment>
<comment type="subunit">
    <text evidence="1">Homodimer.</text>
</comment>
<comment type="similarity">
    <text evidence="2">Belongs to the LuxS family.</text>
</comment>
<comment type="sequence caution" evidence="2">
    <conflict type="erroneous initiation">
        <sequence resource="EMBL-CDS" id="BAC63573"/>
    </conflict>
</comment>
<proteinExistence type="inferred from homology"/>